<feature type="chain" id="PRO_0000447235" description="N-acetylglucosaminyltransferase">
    <location>
        <begin position="1"/>
        <end position="340"/>
    </location>
</feature>
<feature type="binding site" evidence="1">
    <location>
        <position position="21"/>
    </location>
    <ligand>
        <name>UDP</name>
        <dbReference type="ChEBI" id="CHEBI:58223"/>
    </ligand>
</feature>
<feature type="binding site" evidence="1">
    <location>
        <position position="185"/>
    </location>
    <ligand>
        <name>UDP</name>
        <dbReference type="ChEBI" id="CHEBI:58223"/>
    </ligand>
</feature>
<feature type="binding site" evidence="1">
    <location>
        <begin position="254"/>
        <end position="259"/>
    </location>
    <ligand>
        <name>UDP</name>
        <dbReference type="ChEBI" id="CHEBI:58223"/>
    </ligand>
</feature>
<protein>
    <recommendedName>
        <fullName evidence="4">N-acetylglucosaminyltransferase</fullName>
        <ecNumber evidence="1 4">2.4.1.-</ecNumber>
    </recommendedName>
</protein>
<sequence>MEGLSLTVHITNLYGQSFQSTAQIAQNQIAKIGRELGFNELGIYNYNWPDEPSVALDTRFDGIIASVSNNDTVIFQSPTWNSIEWDQAFIDHLAPYNVKKIIFIHDIIPLMFESNRYLLPQFIDYYNKADLIIAPSQPMVDFLRANGLTVEKVVLQHMWDHCASVDFTVTLQNTGVINFAGNLEKFQLVGHWHYPDNPLYAFAKVIDVEPTDNIKFMGWQSDPVLLSKLRHNGGFGLVWSNEPYCKNYMHLNANHKLSTYLAAGLPVIVNENIAESETILRKGLGIVADNLDEAIEKVQGMDDQSYNEMVQRVDDFARLIREGYFAKKALTEAVFKLYYQ</sequence>
<accession>F8KEJ1</accession>
<comment type="function">
    <text evidence="2">Required for polymorphic O-glycosylation of the serine-rich repeat protein in this bacteria. Catalyzes the second step in glycosylation by transferring N-acetylglucosamine from UDP-GlcNAc to the terminal GlcNAc moiety of the 3-O-(N-acetyl-alpha-D-glucosaminyl)-L-seryl-[protein] resulting from the first glycosylation step.</text>
</comment>
<comment type="function">
    <text evidence="4">Part of the accessory SecA2/SecY2 system specifically required to export serine-rich repeat cell wall protein(s) encoded upstream in the same operon.</text>
</comment>
<comment type="catalytic activity">
    <reaction evidence="2">
        <text>3-O-[N-acetyl-alpha-D-glucosaminyl]-L-seryl-[protein] + UDP-N-acetyl-alpha-D-glucosamine = 3-O-[N-acetyl-beta-D-glucosaminyl-(1-&gt;6)-N-acetyl-alpha-D-glucosaminyl]-L-seryl-[protein] + UDP + H(+)</text>
        <dbReference type="Rhea" id="RHEA:59860"/>
        <dbReference type="Rhea" id="RHEA-COMP:15466"/>
        <dbReference type="Rhea" id="RHEA-COMP:15471"/>
        <dbReference type="ChEBI" id="CHEBI:15378"/>
        <dbReference type="ChEBI" id="CHEBI:57705"/>
        <dbReference type="ChEBI" id="CHEBI:58223"/>
        <dbReference type="ChEBI" id="CHEBI:143272"/>
        <dbReference type="ChEBI" id="CHEBI:143279"/>
    </reaction>
</comment>
<comment type="pathway">
    <text evidence="1 2">Protein modification; protein glycosylation.</text>
</comment>
<comment type="subunit">
    <text evidence="1">Homotetramer; a dimer of dimers.</text>
</comment>
<comment type="domain">
    <text evidence="1">Dimerizes via the C-terminus; dimerization is required for tetramer formation. Binds protein substrate via an exposed loop in the N-terminus.</text>
</comment>
<comment type="miscellaneous">
    <text evidence="4">L.reuteri is generally considered to be a symbiont rather than pathogenic bacteria. This strain was isolated from pig.</text>
</comment>
<comment type="similarity">
    <text evidence="1">Belongs to the Gtf3 glucosyltransferase family.</text>
</comment>
<keyword id="KW-0328">Glycosyltransferase</keyword>
<keyword id="KW-0547">Nucleotide-binding</keyword>
<keyword id="KW-0808">Transferase</keyword>
<organism>
    <name type="scientific">Limosilactobacillus reuteri subsp. suis (strain ATCC 53608 / LMG 31752 / 1063)</name>
    <name type="common">Lactobacillus reuteri</name>
    <dbReference type="NCBI Taxonomy" id="927703"/>
    <lineage>
        <taxon>Bacteria</taxon>
        <taxon>Bacillati</taxon>
        <taxon>Bacillota</taxon>
        <taxon>Bacilli</taxon>
        <taxon>Lactobacillales</taxon>
        <taxon>Lactobacillaceae</taxon>
        <taxon>Limosilactobacillus</taxon>
    </lineage>
</organism>
<dbReference type="EC" id="2.4.1.-" evidence="1 4"/>
<dbReference type="EMBL" id="FR854365">
    <property type="protein sequence ID" value="CCC03856.1"/>
    <property type="molecule type" value="Genomic_DNA"/>
</dbReference>
<dbReference type="SMR" id="F8KEJ1"/>
<dbReference type="HOGENOM" id="CLU_057651_0_0_9"/>
<dbReference type="UniPathway" id="UPA00378"/>
<dbReference type="GO" id="GO:0000166">
    <property type="term" value="F:nucleotide binding"/>
    <property type="evidence" value="ECO:0007669"/>
    <property type="project" value="UniProtKB-KW"/>
</dbReference>
<dbReference type="GO" id="GO:0035251">
    <property type="term" value="F:UDP-glucosyltransferase activity"/>
    <property type="evidence" value="ECO:0007669"/>
    <property type="project" value="InterPro"/>
</dbReference>
<dbReference type="GO" id="GO:0008194">
    <property type="term" value="F:UDP-glycosyltransferase activity"/>
    <property type="evidence" value="ECO:0000314"/>
    <property type="project" value="UniProtKB"/>
</dbReference>
<dbReference type="GO" id="GO:0006486">
    <property type="term" value="P:protein glycosylation"/>
    <property type="evidence" value="ECO:0007669"/>
    <property type="project" value="UniProtKB-UniRule"/>
</dbReference>
<dbReference type="Gene3D" id="3.40.50.2000">
    <property type="entry name" value="Glycogen Phosphorylase B"/>
    <property type="match status" value="2"/>
</dbReference>
<dbReference type="HAMAP" id="MF_00841">
    <property type="entry name" value="Gtf3"/>
    <property type="match status" value="1"/>
</dbReference>
<dbReference type="InterPro" id="IPR043676">
    <property type="entry name" value="Gtf3"/>
</dbReference>
<dbReference type="PIRSF" id="PIRSF007023">
    <property type="entry name" value="UDP-Galf_transf"/>
    <property type="match status" value="1"/>
</dbReference>
<dbReference type="SUPFAM" id="SSF53756">
    <property type="entry name" value="UDP-Glycosyltransferase/glycogen phosphorylase"/>
    <property type="match status" value="1"/>
</dbReference>
<proteinExistence type="evidence at protein level"/>
<evidence type="ECO:0000255" key="1">
    <source>
        <dbReference type="HAMAP-Rule" id="MF_00841"/>
    </source>
</evidence>
<evidence type="ECO:0000269" key="2">
    <source>
    </source>
</evidence>
<evidence type="ECO:0000303" key="3">
    <source>
    </source>
</evidence>
<evidence type="ECO:0000305" key="4">
    <source>
    </source>
</evidence>
<reference key="1">
    <citation type="journal article" date="2011" name="J. Bacteriol.">
        <title>Genome sequence of the vertebrate gut symbiont Lactobacillus reuteri ATCC 53608.</title>
        <authorList>
            <person name="Heavens D."/>
            <person name="Tailford L.E."/>
            <person name="Crossman L."/>
            <person name="Jeffers F."/>
            <person name="Mackenzie D.A."/>
            <person name="Caccamo M."/>
            <person name="Juge N."/>
        </authorList>
    </citation>
    <scope>NUCLEOTIDE SEQUENCE [LARGE SCALE GENOMIC DNA]</scope>
    <source>
        <strain>ATCC 53608 / LMG 31752 / 1063</strain>
    </source>
</reference>
<reference key="2">
    <citation type="journal article" date="2019" name="Glycobiology">
        <title>Serine-rich repeat protein adhesins from Lactobacillus reuteri display strain specific glycosylation profiles.</title>
        <authorList>
            <person name="Latousakis D."/>
            <person name="Nepravishta R."/>
            <person name="Rejzek M."/>
            <person name="Wegmann U."/>
            <person name="Le Gall G."/>
            <person name="Kavanaugh D."/>
            <person name="Colquhoun I.J."/>
            <person name="Frese S."/>
            <person name="MacKenzie D.A."/>
            <person name="Walter J."/>
            <person name="Angulo J."/>
            <person name="Field R.A."/>
            <person name="Juge N."/>
        </authorList>
    </citation>
    <scope>FUNCTION</scope>
    <scope>CATALYTIC ACTIVITY</scope>
    <scope>PATHWAY</scope>
    <source>
        <strain>ATCC 53608 / LMG 31752 / 1063</strain>
    </source>
</reference>
<name>GTF3_LIMR5</name>
<gene>
    <name evidence="1" type="primary">gtf3</name>
    <name evidence="3" type="synonym">gtfC</name>
    <name type="ORF">LRATCC53608_1104</name>
</gene>